<accession>I1Z8F0</accession>
<protein>
    <recommendedName>
        <fullName evidence="7">Aquaporin-7-2</fullName>
    </recommendedName>
</protein>
<evidence type="ECO:0000250" key="1">
    <source>
        <dbReference type="UniProtKB" id="B0D4J9"/>
    </source>
</evidence>
<evidence type="ECO:0000255" key="2"/>
<evidence type="ECO:0000256" key="3">
    <source>
        <dbReference type="SAM" id="MobiDB-lite"/>
    </source>
</evidence>
<evidence type="ECO:0000269" key="4">
    <source>
    </source>
</evidence>
<evidence type="ECO:0000269" key="5">
    <source>
    </source>
</evidence>
<evidence type="ECO:0000269" key="6">
    <source>
    </source>
</evidence>
<evidence type="ECO:0000303" key="7">
    <source>
    </source>
</evidence>
<evidence type="ECO:0000305" key="8"/>
<organism>
    <name type="scientific">Laccaria bicolor</name>
    <name type="common">Bicoloured deceiver</name>
    <name type="synonym">Laccaria laccata var. bicolor</name>
    <dbReference type="NCBI Taxonomy" id="29883"/>
    <lineage>
        <taxon>Eukaryota</taxon>
        <taxon>Fungi</taxon>
        <taxon>Dikarya</taxon>
        <taxon>Basidiomycota</taxon>
        <taxon>Agaricomycotina</taxon>
        <taxon>Agaricomycetes</taxon>
        <taxon>Agaricomycetidae</taxon>
        <taxon>Agaricales</taxon>
        <taxon>Agaricineae</taxon>
        <taxon>Hydnangiaceae</taxon>
        <taxon>Laccaria</taxon>
    </lineage>
</organism>
<gene>
    <name evidence="7" type="primary">AQP7-2</name>
</gene>
<dbReference type="EMBL" id="JQ585597">
    <property type="protein sequence ID" value="AFJ15560.1"/>
    <property type="molecule type" value="mRNA"/>
</dbReference>
<dbReference type="SMR" id="I1Z8F0"/>
<dbReference type="GO" id="GO:0005886">
    <property type="term" value="C:plasma membrane"/>
    <property type="evidence" value="ECO:0007669"/>
    <property type="project" value="TreeGrafter"/>
</dbReference>
<dbReference type="GO" id="GO:0015254">
    <property type="term" value="F:glycerol channel activity"/>
    <property type="evidence" value="ECO:0007669"/>
    <property type="project" value="TreeGrafter"/>
</dbReference>
<dbReference type="GO" id="GO:0015250">
    <property type="term" value="F:water channel activity"/>
    <property type="evidence" value="ECO:0007669"/>
    <property type="project" value="TreeGrafter"/>
</dbReference>
<dbReference type="CDD" id="cd00333">
    <property type="entry name" value="MIP"/>
    <property type="match status" value="1"/>
</dbReference>
<dbReference type="FunFam" id="1.20.1080.10:FF:000027">
    <property type="entry name" value="MIP aquaporin"/>
    <property type="match status" value="1"/>
</dbReference>
<dbReference type="Gene3D" id="1.20.1080.10">
    <property type="entry name" value="Glycerol uptake facilitator protein"/>
    <property type="match status" value="1"/>
</dbReference>
<dbReference type="InterPro" id="IPR023271">
    <property type="entry name" value="Aquaporin-like"/>
</dbReference>
<dbReference type="InterPro" id="IPR000425">
    <property type="entry name" value="MIP"/>
</dbReference>
<dbReference type="InterPro" id="IPR050363">
    <property type="entry name" value="MIP/Aquaporin"/>
</dbReference>
<dbReference type="InterPro" id="IPR022357">
    <property type="entry name" value="MIP_CS"/>
</dbReference>
<dbReference type="NCBIfam" id="TIGR00861">
    <property type="entry name" value="MIP"/>
    <property type="match status" value="1"/>
</dbReference>
<dbReference type="PANTHER" id="PTHR43829">
    <property type="entry name" value="AQUAPORIN OR AQUAGLYCEROPORIN RELATED"/>
    <property type="match status" value="1"/>
</dbReference>
<dbReference type="PANTHER" id="PTHR43829:SF9">
    <property type="entry name" value="AQUAPORIN-9"/>
    <property type="match status" value="1"/>
</dbReference>
<dbReference type="Pfam" id="PF00230">
    <property type="entry name" value="MIP"/>
    <property type="match status" value="1"/>
</dbReference>
<dbReference type="PRINTS" id="PR02019">
    <property type="entry name" value="AQUAPORIN7"/>
</dbReference>
<dbReference type="PRINTS" id="PR00783">
    <property type="entry name" value="MINTRINSICP"/>
</dbReference>
<dbReference type="SUPFAM" id="SSF81338">
    <property type="entry name" value="Aquaporin-like"/>
    <property type="match status" value="1"/>
</dbReference>
<dbReference type="PROSITE" id="PS00221">
    <property type="entry name" value="MIP"/>
    <property type="match status" value="1"/>
</dbReference>
<sequence length="332" mass="35711">MSGQHQITEQPSGNPLSRTSTLIQEKPLTPTSSHAGTQKQPEAPRQPTFLIQLQNIRHAIRKPMAEFFGVALLIIFGAGSACQVVLSTNPDVASSARGSFLSINFGWAIGIAMGVWVSGGISGGHINPAITIAMATYRGFPWCKVPSYILAQVLGGVVGAALVYANYIHAIDVFEGGHHIRTEATASLFATYALPYMTQASCFFSEFLATAVLSMMVFALTDKRNHSPTNGLLPFALFILFVGLGASLGMETAYALNPARDFGPRLFLAMAGYGKALFNYRSQYWLWAPIIAPVLGAQAGGLLYDTFLNDGDNSPIKWRCASSQEQQLAEVV</sequence>
<reference key="1">
    <citation type="journal article" date="2015" name="New Phytol.">
        <title>Overexpression of Laccaria bicolor aquaporin JQ585595 alters root water transport properties in ectomycorrhizal white spruce (Picea glauca) seedlings.</title>
        <authorList>
            <person name="Xu H."/>
            <person name="Kemppainen M."/>
            <person name="El Kayal W."/>
            <person name="Lee S.H."/>
            <person name="Pardo A.G."/>
            <person name="Cooke J.E."/>
            <person name="Zwiazek J.J."/>
        </authorList>
    </citation>
    <scope>NUCLEOTIDE SEQUENCE [MRNA]</scope>
    <scope>FUNCTION</scope>
    <scope>TRANSPORTER ACTIVITY</scope>
    <source>
        <strain>UAMH8232</strain>
    </source>
</reference>
<reference key="2">
    <citation type="journal article" date="2015" name="Plant Cell Environ.">
        <title>Laccaria bicolor aquaporin LbAQP1 is required for Hartig net development in trembling aspen (Populus tremuloides).</title>
        <authorList>
            <person name="Navarro-RoDenas A."/>
            <person name="Xu H."/>
            <person name="Kemppainen M."/>
            <person name="Pardo A.G."/>
            <person name="Zwiazek J.J."/>
        </authorList>
    </citation>
    <scope>FUNCTION</scope>
</reference>
<reference key="3">
    <citation type="journal article" date="2016" name="Mycorrhiza">
        <title>Transcript profiling of aquaporins during basidiocarp development in Laccaria bicolor ectomycorrhizal with Picea glauca.</title>
        <authorList>
            <person name="Xu H."/>
            <person name="Navarro-Rodenas A."/>
            <person name="Cooke J.E."/>
            <person name="Zwiazek J.J."/>
        </authorList>
    </citation>
    <scope>INDUCTION</scope>
</reference>
<name>AQP72_LACBI</name>
<comment type="function">
    <text evidence="4 5">Water channel required to facilitate the transport of water across membranes (PubMed:25323307). Does not mediate the transport carbon dioxide across the membrane (PubMed:25857333).</text>
</comment>
<comment type="catalytic activity">
    <reaction evidence="4">
        <text>H2O(in) = H2O(out)</text>
        <dbReference type="Rhea" id="RHEA:29667"/>
        <dbReference type="ChEBI" id="CHEBI:15377"/>
    </reaction>
</comment>
<comment type="subcellular location">
    <subcellularLocation>
        <location evidence="2">Membrane</location>
        <topology evidence="2">Multi-pass membrane protein</topology>
    </subcellularLocation>
</comment>
<comment type="induction">
    <text evidence="6">Expression is up-regulated during development of the basidiocarp.</text>
</comment>
<comment type="domain">
    <text evidence="1">Aquaporins contain two tandem repeats each containing three membrane-spanning domains and a pore-forming loop with the signature motif Asn-Pro-Ala (NPA).</text>
</comment>
<comment type="similarity">
    <text evidence="8">Belongs to the MIP/aquaporin (TC 1.A.8) family.</text>
</comment>
<proteinExistence type="evidence at transcript level"/>
<feature type="chain" id="PRO_0000457452" description="Aquaporin-7-2">
    <location>
        <begin position="1"/>
        <end position="332"/>
    </location>
</feature>
<feature type="topological domain" description="Cytoplasmic" evidence="8">
    <location>
        <begin position="1"/>
        <end position="66"/>
    </location>
</feature>
<feature type="transmembrane region" description="Helical" evidence="2">
    <location>
        <begin position="67"/>
        <end position="87"/>
    </location>
</feature>
<feature type="topological domain" description="Extracellular" evidence="8">
    <location>
        <begin position="88"/>
        <end position="100"/>
    </location>
</feature>
<feature type="transmembrane region" description="Helical" evidence="2">
    <location>
        <begin position="101"/>
        <end position="121"/>
    </location>
</feature>
<feature type="topological domain" description="Cytoplasmic" evidence="8">
    <location>
        <begin position="122"/>
        <end position="144"/>
    </location>
</feature>
<feature type="transmembrane region" description="Helical" evidence="2">
    <location>
        <begin position="145"/>
        <end position="165"/>
    </location>
</feature>
<feature type="topological domain" description="Extracellular" evidence="8">
    <location>
        <begin position="166"/>
        <end position="199"/>
    </location>
</feature>
<feature type="transmembrane region" description="Helical" evidence="2">
    <location>
        <begin position="200"/>
        <end position="220"/>
    </location>
</feature>
<feature type="topological domain" description="Cytoplasmic" evidence="8">
    <location>
        <begin position="221"/>
        <end position="230"/>
    </location>
</feature>
<feature type="transmembrane region" description="Helical" evidence="2">
    <location>
        <begin position="231"/>
        <end position="251"/>
    </location>
</feature>
<feature type="topological domain" description="Extracellular" evidence="8">
    <location>
        <begin position="252"/>
        <end position="283"/>
    </location>
</feature>
<feature type="transmembrane region" description="Helical" evidence="2">
    <location>
        <begin position="284"/>
        <end position="304"/>
    </location>
</feature>
<feature type="topological domain" description="Cytoplasmic" evidence="8">
    <location>
        <begin position="305"/>
        <end position="332"/>
    </location>
</feature>
<feature type="region of interest" description="Disordered" evidence="3">
    <location>
        <begin position="1"/>
        <end position="46"/>
    </location>
</feature>
<feature type="short sequence motif" description="NPA 1" evidence="1">
    <location>
        <begin position="127"/>
        <end position="129"/>
    </location>
</feature>
<feature type="short sequence motif" description="NPA 2" evidence="1">
    <location>
        <begin position="257"/>
        <end position="259"/>
    </location>
</feature>
<feature type="compositionally biased region" description="Polar residues" evidence="3">
    <location>
        <begin position="1"/>
        <end position="40"/>
    </location>
</feature>
<keyword id="KW-0472">Membrane</keyword>
<keyword id="KW-0677">Repeat</keyword>
<keyword id="KW-0812">Transmembrane</keyword>
<keyword id="KW-1133">Transmembrane helix</keyword>
<keyword id="KW-0813">Transport</keyword>